<dbReference type="EC" id="3.4.11.9"/>
<dbReference type="EMBL" id="GG692439">
    <property type="protein sequence ID" value="EER36658.1"/>
    <property type="molecule type" value="Genomic_DNA"/>
</dbReference>
<dbReference type="SMR" id="C6HSY3"/>
<dbReference type="STRING" id="544712.C6HSY3"/>
<dbReference type="VEuPathDB" id="FungiDB:HCDG_09314"/>
<dbReference type="eggNOG" id="KOG2413">
    <property type="taxonomic scope" value="Eukaryota"/>
</dbReference>
<dbReference type="HOGENOM" id="CLU_011781_2_2_1"/>
<dbReference type="OMA" id="EPGMILS"/>
<dbReference type="OrthoDB" id="386at299071"/>
<dbReference type="Proteomes" id="UP000002624">
    <property type="component" value="Unassembled WGS sequence"/>
</dbReference>
<dbReference type="GO" id="GO:0005737">
    <property type="term" value="C:cytoplasm"/>
    <property type="evidence" value="ECO:0007669"/>
    <property type="project" value="UniProtKB-ARBA"/>
</dbReference>
<dbReference type="GO" id="GO:0046872">
    <property type="term" value="F:metal ion binding"/>
    <property type="evidence" value="ECO:0007669"/>
    <property type="project" value="UniProtKB-KW"/>
</dbReference>
<dbReference type="GO" id="GO:0070006">
    <property type="term" value="F:metalloaminopeptidase activity"/>
    <property type="evidence" value="ECO:0007669"/>
    <property type="project" value="InterPro"/>
</dbReference>
<dbReference type="GO" id="GO:0006508">
    <property type="term" value="P:proteolysis"/>
    <property type="evidence" value="ECO:0007669"/>
    <property type="project" value="UniProtKB-KW"/>
</dbReference>
<dbReference type="CDD" id="cd01085">
    <property type="entry name" value="APP"/>
    <property type="match status" value="1"/>
</dbReference>
<dbReference type="FunFam" id="3.40.350.10:FF:000010">
    <property type="entry name" value="Probable Xaa-Pro aminopeptidase P"/>
    <property type="match status" value="1"/>
</dbReference>
<dbReference type="FunFam" id="3.90.230.10:FF:000007">
    <property type="entry name" value="Xaa-Pro aminopeptidase P"/>
    <property type="match status" value="1"/>
</dbReference>
<dbReference type="FunFam" id="3.40.350.10:FF:000003">
    <property type="entry name" value="Xaa-pro aminopeptidase P"/>
    <property type="match status" value="1"/>
</dbReference>
<dbReference type="Gene3D" id="3.90.230.10">
    <property type="entry name" value="Creatinase/methionine aminopeptidase superfamily"/>
    <property type="match status" value="1"/>
</dbReference>
<dbReference type="Gene3D" id="3.40.350.10">
    <property type="entry name" value="Creatinase/prolidase N-terminal domain"/>
    <property type="match status" value="2"/>
</dbReference>
<dbReference type="InterPro" id="IPR029149">
    <property type="entry name" value="Creatin/AminoP/Spt16_N"/>
</dbReference>
<dbReference type="InterPro" id="IPR036005">
    <property type="entry name" value="Creatinase/aminopeptidase-like"/>
</dbReference>
<dbReference type="InterPro" id="IPR000587">
    <property type="entry name" value="Creatinase_N"/>
</dbReference>
<dbReference type="InterPro" id="IPR000994">
    <property type="entry name" value="Pept_M24"/>
</dbReference>
<dbReference type="InterPro" id="IPR033740">
    <property type="entry name" value="Pept_M24B"/>
</dbReference>
<dbReference type="InterPro" id="IPR032416">
    <property type="entry name" value="Peptidase_M24_C"/>
</dbReference>
<dbReference type="InterPro" id="IPR001131">
    <property type="entry name" value="Peptidase_M24B_aminopep-P_CS"/>
</dbReference>
<dbReference type="InterPro" id="IPR050422">
    <property type="entry name" value="X-Pro_aminopeptidase_P"/>
</dbReference>
<dbReference type="PANTHER" id="PTHR43763">
    <property type="entry name" value="XAA-PRO AMINOPEPTIDASE 1"/>
    <property type="match status" value="1"/>
</dbReference>
<dbReference type="PANTHER" id="PTHR43763:SF6">
    <property type="entry name" value="XAA-PRO AMINOPEPTIDASE 1"/>
    <property type="match status" value="1"/>
</dbReference>
<dbReference type="Pfam" id="PF01321">
    <property type="entry name" value="Creatinase_N"/>
    <property type="match status" value="1"/>
</dbReference>
<dbReference type="Pfam" id="PF16189">
    <property type="entry name" value="Creatinase_N_2"/>
    <property type="match status" value="1"/>
</dbReference>
<dbReference type="Pfam" id="PF00557">
    <property type="entry name" value="Peptidase_M24"/>
    <property type="match status" value="1"/>
</dbReference>
<dbReference type="Pfam" id="PF16188">
    <property type="entry name" value="Peptidase_M24_C"/>
    <property type="match status" value="1"/>
</dbReference>
<dbReference type="SUPFAM" id="SSF55920">
    <property type="entry name" value="Creatinase/aminopeptidase"/>
    <property type="match status" value="1"/>
</dbReference>
<dbReference type="SUPFAM" id="SSF53092">
    <property type="entry name" value="Creatinase/prolidase N-terminal domain"/>
    <property type="match status" value="1"/>
</dbReference>
<dbReference type="PROSITE" id="PS00491">
    <property type="entry name" value="PROLINE_PEPTIDASE"/>
    <property type="match status" value="1"/>
</dbReference>
<gene>
    <name type="primary">AMPP</name>
    <name type="ORF">HCDG_09314</name>
</gene>
<sequence>MGPIDTSQRLARLRELMQERKVDVYVVPSEDSHQSEYIAHCDGRREFISGFTGSAGCAIVSMTKAALSTDGRYFNQAAKQLDNNWILLKRGFENMPTWQEWTAEQAEGGKVVGVDPSLITASDARNLSETIKKCGGSLLGVQENLVDLVWGAERPARPSEKVALHPIEFAGKSFEEKISDLRKELQKKKCAGFVISMLDEIAWLFNLRGNDIPYNPVFFAYAIITQSTADLYIDEEKLPAEVKNYLGDKVSLKPYSSIFEDAKVLGQSAQNKSDGETSTKPPQKFLISTRASWSLSLALGGEKNVEEVRSPITDAKAIKNEAELEGMRACHIRDGAALSEYFAWLENELVNKKTVLNEVDASDKLEQIRSKHQHFVGLSFDTISSTGPNAAVIHYKAERNNCSIIDPKAVYLCDSGAQYLDGTTDTTRTLHFGEPTEMEKKAYTLVLKGLISIDTAVFPKGTTGFALDAFARQYLWKEGLDYLHGTGHGVGSYLNVHEGPIGLGTRVQYSEVAIAPGNVISDEPGYYEDGVFGIRIESPFFPHLLINLPFLLTPIIDIIMAKEVKTTHKFGEKPWLGFEHVTMTPLCQKLINPSLLSDVEKKWVNDYHTEIWEKTSKYFENDELTRNWLKRETQPI</sequence>
<proteinExistence type="inferred from homology"/>
<protein>
    <recommendedName>
        <fullName>Probable Xaa-Pro aminopeptidase P</fullName>
        <shortName>AMPP</shortName>
        <shortName>Aminopeptidase P</shortName>
        <ecNumber>3.4.11.9</ecNumber>
    </recommendedName>
    <alternativeName>
        <fullName>Aminoacylproline aminopeptidase</fullName>
    </alternativeName>
    <alternativeName>
        <fullName>Prolidase</fullName>
    </alternativeName>
</protein>
<comment type="function">
    <text evidence="1">Catalyzes the removal of a penultimate prolyl residue from the N-termini of peptides.</text>
</comment>
<comment type="catalytic activity">
    <reaction>
        <text>Release of any N-terminal amino acid, including proline, that is linked to proline, even from a dipeptide or tripeptide.</text>
        <dbReference type="EC" id="3.4.11.9"/>
    </reaction>
</comment>
<comment type="cofactor">
    <cofactor evidence="1">
        <name>Mn(2+)</name>
        <dbReference type="ChEBI" id="CHEBI:29035"/>
    </cofactor>
    <text evidence="1">Binds 2 manganese ions per subunit.</text>
</comment>
<comment type="similarity">
    <text evidence="2">Belongs to the peptidase M24B family.</text>
</comment>
<keyword id="KW-0031">Aminopeptidase</keyword>
<keyword id="KW-0378">Hydrolase</keyword>
<keyword id="KW-0464">Manganese</keyword>
<keyword id="KW-0479">Metal-binding</keyword>
<keyword id="KW-0482">Metalloprotease</keyword>
<keyword id="KW-0645">Protease</keyword>
<keyword id="KW-1185">Reference proteome</keyword>
<evidence type="ECO:0000250" key="1"/>
<evidence type="ECO:0000305" key="2"/>
<accession>C6HSY3</accession>
<reference key="1">
    <citation type="submission" date="2009-05" db="EMBL/GenBank/DDBJ databases">
        <title>The genome sequence of Ajellomyces capsulatus strain H143.</title>
        <authorList>
            <person name="Champion M."/>
            <person name="Cuomo C.A."/>
            <person name="Ma L.-J."/>
            <person name="Henn M.R."/>
            <person name="Sil A."/>
            <person name="Goldman B."/>
            <person name="Young S.K."/>
            <person name="Kodira C.D."/>
            <person name="Zeng Q."/>
            <person name="Koehrsen M."/>
            <person name="Alvarado L."/>
            <person name="Berlin A.M."/>
            <person name="Borenstein D."/>
            <person name="Chen Z."/>
            <person name="Engels R."/>
            <person name="Freedman E."/>
            <person name="Gellesch M."/>
            <person name="Goldberg J."/>
            <person name="Griggs A."/>
            <person name="Gujja S."/>
            <person name="Heiman D.I."/>
            <person name="Hepburn T.A."/>
            <person name="Howarth C."/>
            <person name="Jen D."/>
            <person name="Larson L."/>
            <person name="Lewis B."/>
            <person name="Mehta T."/>
            <person name="Park D."/>
            <person name="Pearson M."/>
            <person name="Roberts A."/>
            <person name="Saif S."/>
            <person name="Shea T.D."/>
            <person name="Shenoy N."/>
            <person name="Sisk P."/>
            <person name="Stolte C."/>
            <person name="Sykes S."/>
            <person name="Walk T."/>
            <person name="White J."/>
            <person name="Yandava C."/>
            <person name="Klein B."/>
            <person name="McEwen J.G."/>
            <person name="Puccia R."/>
            <person name="Goldman G.H."/>
            <person name="Felipe M.S."/>
            <person name="Nino-Vega G."/>
            <person name="San-Blas G."/>
            <person name="Taylor J.W."/>
            <person name="Mendoza L."/>
            <person name="Galagan J.E."/>
            <person name="Nusbaum C."/>
            <person name="Birren B.W."/>
        </authorList>
    </citation>
    <scope>NUCLEOTIDE SEQUENCE [LARGE SCALE GENOMIC DNA]</scope>
    <source>
        <strain>H143</strain>
    </source>
</reference>
<organism>
    <name type="scientific">Ajellomyces capsulatus (strain H143)</name>
    <name type="common">Darling's disease fungus</name>
    <name type="synonym">Histoplasma capsulatum</name>
    <dbReference type="NCBI Taxonomy" id="544712"/>
    <lineage>
        <taxon>Eukaryota</taxon>
        <taxon>Fungi</taxon>
        <taxon>Dikarya</taxon>
        <taxon>Ascomycota</taxon>
        <taxon>Pezizomycotina</taxon>
        <taxon>Eurotiomycetes</taxon>
        <taxon>Eurotiomycetidae</taxon>
        <taxon>Onygenales</taxon>
        <taxon>Ajellomycetaceae</taxon>
        <taxon>Histoplasma</taxon>
    </lineage>
</organism>
<feature type="chain" id="PRO_0000411771" description="Probable Xaa-Pro aminopeptidase P">
    <location>
        <begin position="1"/>
        <end position="636"/>
    </location>
</feature>
<feature type="binding site" evidence="1">
    <location>
        <position position="414"/>
    </location>
    <ligand>
        <name>Mn(2+)</name>
        <dbReference type="ChEBI" id="CHEBI:29035"/>
        <label>2</label>
    </ligand>
</feature>
<feature type="binding site" evidence="1">
    <location>
        <position position="425"/>
    </location>
    <ligand>
        <name>Mn(2+)</name>
        <dbReference type="ChEBI" id="CHEBI:29035"/>
        <label>1</label>
    </ligand>
</feature>
<feature type="binding site" evidence="1">
    <location>
        <position position="425"/>
    </location>
    <ligand>
        <name>Mn(2+)</name>
        <dbReference type="ChEBI" id="CHEBI:29035"/>
        <label>2</label>
    </ligand>
</feature>
<feature type="binding site" evidence="1">
    <location>
        <position position="523"/>
    </location>
    <ligand>
        <name>Mn(2+)</name>
        <dbReference type="ChEBI" id="CHEBI:29035"/>
        <label>1</label>
    </ligand>
</feature>
<feature type="binding site" evidence="1">
    <location>
        <position position="537"/>
    </location>
    <ligand>
        <name>Mn(2+)</name>
        <dbReference type="ChEBI" id="CHEBI:29035"/>
        <label>1</label>
    </ligand>
</feature>
<feature type="binding site" evidence="1">
    <location>
        <position position="537"/>
    </location>
    <ligand>
        <name>Mn(2+)</name>
        <dbReference type="ChEBI" id="CHEBI:29035"/>
        <label>2</label>
    </ligand>
</feature>
<name>AMPP1_AJECH</name>